<accession>B2U2S3</accession>
<dbReference type="EMBL" id="CP001063">
    <property type="protein sequence ID" value="ACD10438.1"/>
    <property type="molecule type" value="Genomic_DNA"/>
</dbReference>
<dbReference type="RefSeq" id="WP_000091945.1">
    <property type="nucleotide sequence ID" value="NC_010658.1"/>
</dbReference>
<dbReference type="SMR" id="B2U2S3"/>
<dbReference type="STRING" id="344609.SbBS512_E3690"/>
<dbReference type="GeneID" id="86948169"/>
<dbReference type="KEGG" id="sbc:SbBS512_E3690"/>
<dbReference type="HOGENOM" id="CLU_065464_1_2_6"/>
<dbReference type="Proteomes" id="UP000001030">
    <property type="component" value="Chromosome"/>
</dbReference>
<dbReference type="GO" id="GO:0022625">
    <property type="term" value="C:cytosolic large ribosomal subunit"/>
    <property type="evidence" value="ECO:0007669"/>
    <property type="project" value="TreeGrafter"/>
</dbReference>
<dbReference type="GO" id="GO:0019843">
    <property type="term" value="F:rRNA binding"/>
    <property type="evidence" value="ECO:0007669"/>
    <property type="project" value="UniProtKB-UniRule"/>
</dbReference>
<dbReference type="GO" id="GO:0003735">
    <property type="term" value="F:structural constituent of ribosome"/>
    <property type="evidence" value="ECO:0007669"/>
    <property type="project" value="InterPro"/>
</dbReference>
<dbReference type="GO" id="GO:0002181">
    <property type="term" value="P:cytoplasmic translation"/>
    <property type="evidence" value="ECO:0007669"/>
    <property type="project" value="TreeGrafter"/>
</dbReference>
<dbReference type="FunFam" id="3.90.930.12:FF:000001">
    <property type="entry name" value="50S ribosomal protein L6"/>
    <property type="match status" value="1"/>
</dbReference>
<dbReference type="FunFam" id="3.90.930.12:FF:000002">
    <property type="entry name" value="50S ribosomal protein L6"/>
    <property type="match status" value="1"/>
</dbReference>
<dbReference type="Gene3D" id="3.90.930.12">
    <property type="entry name" value="Ribosomal protein L6, alpha-beta domain"/>
    <property type="match status" value="2"/>
</dbReference>
<dbReference type="HAMAP" id="MF_01365_B">
    <property type="entry name" value="Ribosomal_uL6_B"/>
    <property type="match status" value="1"/>
</dbReference>
<dbReference type="InterPro" id="IPR000702">
    <property type="entry name" value="Ribosomal_uL6-like"/>
</dbReference>
<dbReference type="InterPro" id="IPR036789">
    <property type="entry name" value="Ribosomal_uL6-like_a/b-dom_sf"/>
</dbReference>
<dbReference type="InterPro" id="IPR020040">
    <property type="entry name" value="Ribosomal_uL6_a/b-dom"/>
</dbReference>
<dbReference type="InterPro" id="IPR019906">
    <property type="entry name" value="Ribosomal_uL6_bac-type"/>
</dbReference>
<dbReference type="InterPro" id="IPR002358">
    <property type="entry name" value="Ribosomal_uL6_CS"/>
</dbReference>
<dbReference type="NCBIfam" id="TIGR03654">
    <property type="entry name" value="L6_bact"/>
    <property type="match status" value="1"/>
</dbReference>
<dbReference type="PANTHER" id="PTHR11655">
    <property type="entry name" value="60S/50S RIBOSOMAL PROTEIN L6/L9"/>
    <property type="match status" value="1"/>
</dbReference>
<dbReference type="PANTHER" id="PTHR11655:SF14">
    <property type="entry name" value="LARGE RIBOSOMAL SUBUNIT PROTEIN UL6M"/>
    <property type="match status" value="1"/>
</dbReference>
<dbReference type="Pfam" id="PF00347">
    <property type="entry name" value="Ribosomal_L6"/>
    <property type="match status" value="2"/>
</dbReference>
<dbReference type="PIRSF" id="PIRSF002162">
    <property type="entry name" value="Ribosomal_L6"/>
    <property type="match status" value="1"/>
</dbReference>
<dbReference type="PRINTS" id="PR00059">
    <property type="entry name" value="RIBOSOMALL6"/>
</dbReference>
<dbReference type="SUPFAM" id="SSF56053">
    <property type="entry name" value="Ribosomal protein L6"/>
    <property type="match status" value="2"/>
</dbReference>
<dbReference type="PROSITE" id="PS00525">
    <property type="entry name" value="RIBOSOMAL_L6_1"/>
    <property type="match status" value="1"/>
</dbReference>
<evidence type="ECO:0000255" key="1">
    <source>
        <dbReference type="HAMAP-Rule" id="MF_01365"/>
    </source>
</evidence>
<evidence type="ECO:0000305" key="2"/>
<comment type="function">
    <text evidence="1">This protein binds to the 23S rRNA, and is important in its secondary structure. It is located near the subunit interface in the base of the L7/L12 stalk, and near the tRNA binding site of the peptidyltransferase center.</text>
</comment>
<comment type="subunit">
    <text evidence="1">Part of the 50S ribosomal subunit.</text>
</comment>
<comment type="similarity">
    <text evidence="1">Belongs to the universal ribosomal protein uL6 family.</text>
</comment>
<feature type="chain" id="PRO_1000144050" description="Large ribosomal subunit protein uL6">
    <location>
        <begin position="1"/>
        <end position="177"/>
    </location>
</feature>
<feature type="modified residue" description="N6-acetyllysine" evidence="1">
    <location>
        <position position="44"/>
    </location>
</feature>
<sequence>MSRVAKAPVVVPAGVDVKINGQVITIKGKNGELTRTLNDAVEVKHADNTLTFGPRDGYADGWAQAGTARALLNSMVIGVTEGFTKKLQLVGVGYRAAVKGNVINLSLGFSHPVDHQLPAGITAECPTQTEIVLKGADKQVIGQVAADLRAYRRPEPYKGKGVRYADEVVRTKEAKKK</sequence>
<proteinExistence type="inferred from homology"/>
<gene>
    <name evidence="1" type="primary">rplF</name>
    <name type="ordered locus">SbBS512_E3690</name>
</gene>
<keyword id="KW-0007">Acetylation</keyword>
<keyword id="KW-1185">Reference proteome</keyword>
<keyword id="KW-0687">Ribonucleoprotein</keyword>
<keyword id="KW-0689">Ribosomal protein</keyword>
<keyword id="KW-0694">RNA-binding</keyword>
<keyword id="KW-0699">rRNA-binding</keyword>
<protein>
    <recommendedName>
        <fullName evidence="1">Large ribosomal subunit protein uL6</fullName>
    </recommendedName>
    <alternativeName>
        <fullName evidence="2">50S ribosomal protein L6</fullName>
    </alternativeName>
</protein>
<organism>
    <name type="scientific">Shigella boydii serotype 18 (strain CDC 3083-94 / BS512)</name>
    <dbReference type="NCBI Taxonomy" id="344609"/>
    <lineage>
        <taxon>Bacteria</taxon>
        <taxon>Pseudomonadati</taxon>
        <taxon>Pseudomonadota</taxon>
        <taxon>Gammaproteobacteria</taxon>
        <taxon>Enterobacterales</taxon>
        <taxon>Enterobacteriaceae</taxon>
        <taxon>Shigella</taxon>
    </lineage>
</organism>
<reference key="1">
    <citation type="submission" date="2008-05" db="EMBL/GenBank/DDBJ databases">
        <title>Complete sequence of Shigella boydii serotype 18 strain BS512.</title>
        <authorList>
            <person name="Rasko D.A."/>
            <person name="Rosovitz M."/>
            <person name="Maurelli A.T."/>
            <person name="Myers G."/>
            <person name="Seshadri R."/>
            <person name="Cer R."/>
            <person name="Jiang L."/>
            <person name="Ravel J."/>
            <person name="Sebastian Y."/>
        </authorList>
    </citation>
    <scope>NUCLEOTIDE SEQUENCE [LARGE SCALE GENOMIC DNA]</scope>
    <source>
        <strain>CDC 3083-94 / BS512</strain>
    </source>
</reference>
<name>RL6_SHIB3</name>